<sequence length="602" mass="70838">MARLTKRRQADTKAIQHLWAAIEIIRNQKQIANIDRITKYMSRVHGMHPKETTRQLSLAVKDGLIVETLTVGCKGSKAGIEQEGYWLPGDEIDWETETHDWYCFECHLPGEVLICDLCFRVYHSKCLSDEFRLRDSSSHWQCPVCRSIKKKHSNKQEMGTYLRFIVSRMKERAIDLNKKGKDSKHPMYRRLVHSAVDVPTIQEKVNEGKYRSYEEFKADAQLLLHNTVIFYGADSEQADIARMLYKDTCHELDELQLCKNCFYLSNARPDNWFCYPCIPNHELVWAKMKGFGFWPAKVMQKEDNQVDVRFFGHHHQRAWIPSENIQDITVNVHRLHVKRSMGWKKACDELELHQRFLREGRFWKSKNEDRGEEEAESSISSTSNEQLKVTQEPRAKKGRRNQSVEPKKEEPEPETEAVSSSQEIPTMPQPIERVSVSTQTKKLSASSPRMLHRSTQTTSDGVCQSMCHDKYTKIFNDFKDRMKSDHKRETERVVREALEKLRSEMEEEKRQAVNKAVASLQGDMDRKGKQLKEKCKEEFVEEIKKLAAQHKQLISQTKKKQWCYNCEEEAMYHCCWNTSYCSIKCQQEHWHAEHKRTCRRKR</sequence>
<protein>
    <recommendedName>
        <fullName>Zinc finger MYND domain-containing protein 11</fullName>
    </recommendedName>
</protein>
<organism>
    <name type="scientific">Mus musculus</name>
    <name type="common">Mouse</name>
    <dbReference type="NCBI Taxonomy" id="10090"/>
    <lineage>
        <taxon>Eukaryota</taxon>
        <taxon>Metazoa</taxon>
        <taxon>Chordata</taxon>
        <taxon>Craniata</taxon>
        <taxon>Vertebrata</taxon>
        <taxon>Euteleostomi</taxon>
        <taxon>Mammalia</taxon>
        <taxon>Eutheria</taxon>
        <taxon>Euarchontoglires</taxon>
        <taxon>Glires</taxon>
        <taxon>Rodentia</taxon>
        <taxon>Myomorpha</taxon>
        <taxon>Muroidea</taxon>
        <taxon>Muridae</taxon>
        <taxon>Murinae</taxon>
        <taxon>Mus</taxon>
        <taxon>Mus</taxon>
    </lineage>
</organism>
<comment type="function">
    <text evidence="1 9">Chromatin reader that specifically recognizes and binds histone H3.3 trimethylated at 'Lys-36' (H3.3K36me3) and regulates RNA polymerase II elongation. Does not bind other histone H3 subtypes (H3.1 or H3.2). Colocalizes with highly expressed genes and functions as a transcription corepressor by modulating RNA polymerase II at the elongation stage (PubMed:24590075). Binds non-specifically to dsDNA (By similarity). Acts as a tumor-suppressor by repressing a transcriptional program essential for tumor cell growth (PubMed:24590075).</text>
</comment>
<comment type="subunit">
    <text evidence="1">Homooligomer; forms homooligomers via its C-terminus. Interacts with histone H3.3 trimethylated at 'Lys-36' (H3.3K36me3). Interacts (via MYND-type zinc finger) with NCOR1. Interacts (via MYND-type zinc finger) with MGA protein (via PXLXP motif). Interacts (via MYND-type zinc finger) with EZH2. Interacts with EMSY and E2F6. Interacts with PIAS1 and UBE2I (By similarity).</text>
</comment>
<comment type="interaction">
    <interactant intactId="EBI-647813">
        <id>Q8R5C8</id>
    </interactant>
    <interactant intactId="EBI-120658">
        <id>P84243</id>
        <label>H3-3B</label>
    </interactant>
    <organismsDiffer>true</organismsDiffer>
    <experiments>6</experiments>
</comment>
<comment type="interaction">
    <interactant intactId="EBI-647813">
        <id>Q8R5C8</id>
    </interactant>
    <interactant intactId="EBI-79722">
        <id>P68431</id>
        <label>H3C12</label>
    </interactant>
    <organismsDiffer>true</organismsDiffer>
    <experiments>4</experiments>
</comment>
<comment type="subcellular location">
    <subcellularLocation>
        <location evidence="1">Nucleus</location>
    </subcellularLocation>
    <subcellularLocation>
        <location evidence="1">Chromosome</location>
    </subcellularLocation>
    <text evidence="1">Associates with chromatin and mitotic chromosomes.</text>
</comment>
<comment type="domain">
    <text evidence="9">The PWWP domain specifically recognizes and binds histone H3.3 trimethylated at 'Lys-36' (H3.3K36me3) and adopts a five-bladed beta-barrel fold with an extended C-terminal alpha-helix, with a conserved H3.3K36me3-binding aromatic cage formed by Phe-291 and Trp-294 of the beta1-beta2 loop and Phe-310 of the beta3-beta4 loop. Specific recognition of H3.3 histone is mediated by the encapsulation of the H3.3-specific 'Ser 31' residue in a composite pocket formed by the tandem bromo-PWWP domains (PubMed:24590075).</text>
</comment>
<comment type="PTM">
    <text evidence="1">Ubiquitinated, leading to proteasomal degradation.</text>
</comment>
<comment type="PTM">
    <text evidence="1">Sumoylated following its interaction with PIAS1 and UBE2I.</text>
</comment>
<comment type="sequence caution" evidence="10">
    <conflict type="erroneous initiation">
        <sequence resource="EMBL-CDS" id="AAH22945"/>
    </conflict>
    <text>Truncated N-terminus.</text>
</comment>
<proteinExistence type="evidence at protein level"/>
<gene>
    <name type="primary">Zmynd11</name>
</gene>
<feature type="chain" id="PRO_0000211219" description="Zinc finger MYND domain-containing protein 11">
    <location>
        <begin position="1"/>
        <end position="602"/>
    </location>
</feature>
<feature type="domain" description="SAMD1-like winged helix (WH)" evidence="7">
    <location>
        <begin position="6"/>
        <end position="82"/>
    </location>
</feature>
<feature type="domain" description="Bromo" evidence="3">
    <location>
        <begin position="149"/>
        <end position="255"/>
    </location>
</feature>
<feature type="domain" description="PWWP" evidence="6">
    <location>
        <begin position="280"/>
        <end position="331"/>
    </location>
</feature>
<feature type="zinc finger region" description="PHD-type" evidence="5">
    <location>
        <begin position="100"/>
        <end position="148"/>
    </location>
</feature>
<feature type="zinc finger region" description="MYND-type" evidence="4">
    <location>
        <begin position="563"/>
        <end position="598"/>
    </location>
</feature>
<feature type="region of interest" description="Aromatic cage required for H3.3K36me3-specific binding">
    <location>
        <begin position="291"/>
        <end position="310"/>
    </location>
</feature>
<feature type="region of interest" description="Disordered" evidence="8">
    <location>
        <begin position="366"/>
        <end position="461"/>
    </location>
</feature>
<feature type="short sequence motif" description="Nuclear localization signal" evidence="2">
    <location>
        <begin position="394"/>
        <end position="400"/>
    </location>
</feature>
<feature type="compositionally biased region" description="Polar residues" evidence="8">
    <location>
        <begin position="435"/>
        <end position="461"/>
    </location>
</feature>
<feature type="binding site" evidence="9 11 12">
    <location>
        <position position="258"/>
    </location>
    <ligand>
        <name>Zn(2+)</name>
        <dbReference type="ChEBI" id="CHEBI:29105"/>
    </ligand>
</feature>
<feature type="binding site" evidence="9 11 12">
    <location>
        <position position="261"/>
    </location>
    <ligand>
        <name>Zn(2+)</name>
        <dbReference type="ChEBI" id="CHEBI:29105"/>
    </ligand>
</feature>
<feature type="binding site" evidence="9 11 12">
    <location>
        <position position="277"/>
    </location>
    <ligand>
        <name>Zn(2+)</name>
        <dbReference type="ChEBI" id="CHEBI:29105"/>
    </ligand>
</feature>
<feature type="binding site" evidence="9 11 12">
    <location>
        <position position="281"/>
    </location>
    <ligand>
        <name>Zn(2+)</name>
        <dbReference type="ChEBI" id="CHEBI:29105"/>
    </ligand>
</feature>
<feature type="binding site" evidence="4">
    <location>
        <position position="563"/>
    </location>
    <ligand>
        <name>Zn(2+)</name>
        <dbReference type="ChEBI" id="CHEBI:29105"/>
        <label>1</label>
    </ligand>
</feature>
<feature type="binding site" evidence="4">
    <location>
        <position position="566"/>
    </location>
    <ligand>
        <name>Zn(2+)</name>
        <dbReference type="ChEBI" id="CHEBI:29105"/>
        <label>1</label>
    </ligand>
</feature>
<feature type="binding site" evidence="4">
    <location>
        <position position="574"/>
    </location>
    <ligand>
        <name>Zn(2+)</name>
        <dbReference type="ChEBI" id="CHEBI:29105"/>
        <label>2</label>
    </ligand>
</feature>
<feature type="binding site" evidence="4">
    <location>
        <position position="575"/>
    </location>
    <ligand>
        <name>Zn(2+)</name>
        <dbReference type="ChEBI" id="CHEBI:29105"/>
        <label>2</label>
    </ligand>
</feature>
<feature type="binding site" evidence="4">
    <location>
        <position position="581"/>
    </location>
    <ligand>
        <name>Zn(2+)</name>
        <dbReference type="ChEBI" id="CHEBI:29105"/>
        <label>1</label>
    </ligand>
</feature>
<feature type="binding site" evidence="4">
    <location>
        <position position="585"/>
    </location>
    <ligand>
        <name>Zn(2+)</name>
        <dbReference type="ChEBI" id="CHEBI:29105"/>
        <label>1</label>
    </ligand>
</feature>
<feature type="binding site" evidence="4">
    <location>
        <position position="594"/>
    </location>
    <ligand>
        <name>Zn(2+)</name>
        <dbReference type="ChEBI" id="CHEBI:29105"/>
        <label>2</label>
    </ligand>
</feature>
<feature type="binding site" evidence="4">
    <location>
        <position position="598"/>
    </location>
    <ligand>
        <name>Zn(2+)</name>
        <dbReference type="ChEBI" id="CHEBI:29105"/>
        <label>2</label>
    </ligand>
</feature>
<feature type="modified residue" description="Phosphoserine" evidence="1">
    <location>
        <position position="421"/>
    </location>
</feature>
<feature type="cross-link" description="Glycyl lysine isopeptide (Lys-Gly) (interchain with G-Cter in SUMO2)" evidence="1">
    <location>
        <position position="366"/>
    </location>
</feature>
<feature type="cross-link" description="Glycyl lysine isopeptide (Lys-Gly) (interchain with G-Cter in SUMO2)" evidence="1">
    <location>
        <position position="407"/>
    </location>
</feature>
<feature type="cross-link" description="Glycyl lysine isopeptide (Lys-Gly) (interchain with G-Cter in SUMO2)" evidence="1">
    <location>
        <position position="408"/>
    </location>
</feature>
<feature type="mutagenesis site" description="Impaired H3.3K36me3 binding." evidence="9">
    <original>R</original>
    <variation>A</variation>
    <location>
        <position position="168"/>
    </location>
</feature>
<feature type="mutagenesis site" description="No effect on protein folding and histone binding." evidence="9">
    <original>DSE</original>
    <variation>ASA</variation>
    <location>
        <begin position="234"/>
        <end position="236"/>
    </location>
</feature>
<feature type="mutagenesis site" description="Impaired H3.3K36me3 binding." evidence="9">
    <original>E</original>
    <variation>A</variation>
    <location>
        <position position="251"/>
    </location>
</feature>
<feature type="mutagenesis site" description="Impaired H3.3K36me3 binding." evidence="9">
    <original>N</original>
    <variation>A</variation>
    <location>
        <position position="266"/>
    </location>
</feature>
<feature type="mutagenesis site" description="Abolished H3.3K36me3 binding." evidence="9">
    <original>F</original>
    <variation>A</variation>
    <location>
        <position position="291"/>
    </location>
</feature>
<feature type="mutagenesis site" description="Abolished H3.3K36me3 binding." evidence="9">
    <original>W</original>
    <variation>A</variation>
    <location>
        <position position="294"/>
    </location>
</feature>
<feature type="mutagenesis site" description="Impaired H3.3K36me3 binding." evidence="9">
    <original>D</original>
    <variation>A</variation>
    <location>
        <position position="307"/>
    </location>
</feature>
<feature type="mutagenesis site" description="Abolished H3.3K36me3 binding." evidence="9">
    <original>F</original>
    <variation>A</variation>
    <location>
        <position position="310"/>
    </location>
</feature>
<feature type="sequence conflict" description="In Ref. 4; BAC26199." evidence="10" ref="4">
    <original>G</original>
    <variation>S</variation>
    <location>
        <position position="371"/>
    </location>
</feature>
<feature type="sequence conflict" description="In Ref. 3; AAH22945." evidence="10" ref="3">
    <original>S</original>
    <variation>N</variation>
    <location>
        <position position="519"/>
    </location>
</feature>
<feature type="sequence conflict" description="In Ref. 3; AAH22945." evidence="10" ref="3">
    <original>D</original>
    <variation>E</variation>
    <location>
        <position position="523"/>
    </location>
</feature>
<feature type="sequence conflict" description="In Ref. 3; AAH22945." evidence="10" ref="3">
    <original>G</original>
    <variation>C</variation>
    <location>
        <position position="528"/>
    </location>
</feature>
<feature type="sequence conflict" description="In Ref. 3; AAH22945." evidence="10" ref="3">
    <original>L</original>
    <variation>V</variation>
    <location>
        <position position="531"/>
    </location>
</feature>
<feature type="helix" evidence="13">
    <location>
        <begin position="155"/>
        <end position="171"/>
    </location>
</feature>
<feature type="helix" evidence="14">
    <location>
        <begin position="173"/>
        <end position="175"/>
    </location>
</feature>
<feature type="helix" evidence="13">
    <location>
        <begin position="188"/>
        <end position="191"/>
    </location>
</feature>
<feature type="helix" evidence="13">
    <location>
        <begin position="198"/>
        <end position="206"/>
    </location>
</feature>
<feature type="helix" evidence="13">
    <location>
        <begin position="213"/>
        <end position="231"/>
    </location>
</feature>
<feature type="helix" evidence="13">
    <location>
        <begin position="236"/>
        <end position="257"/>
    </location>
</feature>
<feature type="helix" evidence="13">
    <location>
        <begin position="259"/>
        <end position="267"/>
    </location>
</feature>
<feature type="helix" evidence="13">
    <location>
        <begin position="272"/>
        <end position="274"/>
    </location>
</feature>
<feature type="strand" evidence="13">
    <location>
        <begin position="283"/>
        <end position="287"/>
    </location>
</feature>
<feature type="turn" evidence="14">
    <location>
        <begin position="289"/>
        <end position="291"/>
    </location>
</feature>
<feature type="strand" evidence="13">
    <location>
        <begin position="293"/>
        <end position="302"/>
    </location>
</feature>
<feature type="strand" evidence="13">
    <location>
        <begin position="305"/>
        <end position="312"/>
    </location>
</feature>
<feature type="helix" evidence="13">
    <location>
        <begin position="313"/>
        <end position="315"/>
    </location>
</feature>
<feature type="strand" evidence="13">
    <location>
        <begin position="317"/>
        <end position="321"/>
    </location>
</feature>
<feature type="helix" evidence="13">
    <location>
        <begin position="322"/>
        <end position="324"/>
    </location>
</feature>
<feature type="strand" evidence="13">
    <location>
        <begin position="325"/>
        <end position="327"/>
    </location>
</feature>
<feature type="turn" evidence="13">
    <location>
        <begin position="332"/>
        <end position="334"/>
    </location>
</feature>
<feature type="helix" evidence="13">
    <location>
        <begin position="341"/>
        <end position="359"/>
    </location>
</feature>
<dbReference type="EMBL" id="AC146596">
    <property type="status" value="NOT_ANNOTATED_CDS"/>
    <property type="molecule type" value="Genomic_DNA"/>
</dbReference>
<dbReference type="EMBL" id="AC153144">
    <property type="status" value="NOT_ANNOTATED_CDS"/>
    <property type="molecule type" value="Genomic_DNA"/>
</dbReference>
<dbReference type="EMBL" id="CH466588">
    <property type="protein sequence ID" value="EDL32291.1"/>
    <property type="molecule type" value="Genomic_DNA"/>
</dbReference>
<dbReference type="EMBL" id="CH466588">
    <property type="protein sequence ID" value="EDL32294.1"/>
    <property type="molecule type" value="Genomic_DNA"/>
</dbReference>
<dbReference type="EMBL" id="BC022945">
    <property type="protein sequence ID" value="AAH22945.1"/>
    <property type="status" value="ALT_INIT"/>
    <property type="molecule type" value="mRNA"/>
</dbReference>
<dbReference type="EMBL" id="AK028931">
    <property type="protein sequence ID" value="BAC26199.1"/>
    <property type="molecule type" value="mRNA"/>
</dbReference>
<dbReference type="CCDS" id="CCDS56870.1"/>
<dbReference type="RefSeq" id="NP_001186070.1">
    <property type="nucleotide sequence ID" value="NM_001199141.2"/>
</dbReference>
<dbReference type="RefSeq" id="NP_001334403.1">
    <property type="nucleotide sequence ID" value="NM_001347474.1"/>
</dbReference>
<dbReference type="RefSeq" id="NP_001334405.1">
    <property type="nucleotide sequence ID" value="NM_001347476.1"/>
</dbReference>
<dbReference type="RefSeq" id="XP_006516569.1">
    <property type="nucleotide sequence ID" value="XM_006516506.4"/>
</dbReference>
<dbReference type="RefSeq" id="XP_030103223.1">
    <property type="nucleotide sequence ID" value="XM_030247363.2"/>
</dbReference>
<dbReference type="PDB" id="4N4G">
    <property type="method" value="X-ray"/>
    <property type="resolution" value="1.95 A"/>
    <property type="chains" value="A=154-371"/>
</dbReference>
<dbReference type="PDB" id="4N4H">
    <property type="method" value="X-ray"/>
    <property type="resolution" value="2.30 A"/>
    <property type="chains" value="A=154-371"/>
</dbReference>
<dbReference type="PDB" id="4N4I">
    <property type="method" value="X-ray"/>
    <property type="resolution" value="2.00 A"/>
    <property type="chains" value="A=154-371"/>
</dbReference>
<dbReference type="PDBsum" id="4N4G"/>
<dbReference type="PDBsum" id="4N4H"/>
<dbReference type="PDBsum" id="4N4I"/>
<dbReference type="SMR" id="Q8R5C8"/>
<dbReference type="BioGRID" id="211523">
    <property type="interactions" value="1"/>
</dbReference>
<dbReference type="DIP" id="DIP-49596N"/>
<dbReference type="FunCoup" id="Q8R5C8">
    <property type="interactions" value="4139"/>
</dbReference>
<dbReference type="IntAct" id="Q8R5C8">
    <property type="interactions" value="4"/>
</dbReference>
<dbReference type="STRING" id="10090.ENSMUSP00000106268"/>
<dbReference type="iPTMnet" id="Q8R5C8"/>
<dbReference type="PhosphoSitePlus" id="Q8R5C8"/>
<dbReference type="PaxDb" id="10090-ENSMUSP00000059767"/>
<dbReference type="PeptideAtlas" id="Q8R5C8"/>
<dbReference type="ProteomicsDB" id="274998"/>
<dbReference type="Antibodypedia" id="9245">
    <property type="antibodies" value="246 antibodies from 30 providers"/>
</dbReference>
<dbReference type="DNASU" id="66505"/>
<dbReference type="Ensembl" id="ENSMUST00000110634.8">
    <property type="protein sequence ID" value="ENSMUSP00000106264.2"/>
    <property type="gene ID" value="ENSMUSG00000021156.18"/>
</dbReference>
<dbReference type="Ensembl" id="ENSMUST00000110636.9">
    <property type="protein sequence ID" value="ENSMUSP00000106266.2"/>
    <property type="gene ID" value="ENSMUSG00000021156.18"/>
</dbReference>
<dbReference type="GeneID" id="66505"/>
<dbReference type="KEGG" id="mmu:66505"/>
<dbReference type="UCSC" id="uc007pkx.1">
    <property type="organism name" value="mouse"/>
</dbReference>
<dbReference type="AGR" id="MGI:1913755"/>
<dbReference type="CTD" id="10771"/>
<dbReference type="MGI" id="MGI:1913755">
    <property type="gene designation" value="Zmynd11"/>
</dbReference>
<dbReference type="VEuPathDB" id="HostDB:ENSMUSG00000021156"/>
<dbReference type="eggNOG" id="KOG3612">
    <property type="taxonomic scope" value="Eukaryota"/>
</dbReference>
<dbReference type="GeneTree" id="ENSGT00940000156942"/>
<dbReference type="InParanoid" id="Q8R5C8"/>
<dbReference type="OMA" id="QCHRVYH"/>
<dbReference type="OrthoDB" id="6431559at2759"/>
<dbReference type="BioGRID-ORCS" id="66505">
    <property type="hits" value="4 hits in 81 CRISPR screens"/>
</dbReference>
<dbReference type="ChiTaRS" id="Zmynd11">
    <property type="organism name" value="mouse"/>
</dbReference>
<dbReference type="EvolutionaryTrace" id="Q8R5C8"/>
<dbReference type="PRO" id="PR:Q8R5C8"/>
<dbReference type="Proteomes" id="UP000000589">
    <property type="component" value="Chromosome 13"/>
</dbReference>
<dbReference type="RNAct" id="Q8R5C8">
    <property type="molecule type" value="protein"/>
</dbReference>
<dbReference type="Bgee" id="ENSMUSG00000021156">
    <property type="expression patterns" value="Expressed in ciliary body and 266 other cell types or tissues"/>
</dbReference>
<dbReference type="ExpressionAtlas" id="Q8R5C8">
    <property type="expression patterns" value="baseline and differential"/>
</dbReference>
<dbReference type="GO" id="GO:0005694">
    <property type="term" value="C:chromosome"/>
    <property type="evidence" value="ECO:0007669"/>
    <property type="project" value="UniProtKB-SubCell"/>
</dbReference>
<dbReference type="GO" id="GO:0005654">
    <property type="term" value="C:nucleoplasm"/>
    <property type="evidence" value="ECO:0007669"/>
    <property type="project" value="Ensembl"/>
</dbReference>
<dbReference type="GO" id="GO:0005634">
    <property type="term" value="C:nucleus"/>
    <property type="evidence" value="ECO:0000250"/>
    <property type="project" value="UniProtKB"/>
</dbReference>
<dbReference type="GO" id="GO:0003690">
    <property type="term" value="F:double-stranded DNA binding"/>
    <property type="evidence" value="ECO:0000250"/>
    <property type="project" value="UniProtKB"/>
</dbReference>
<dbReference type="GO" id="GO:0140003">
    <property type="term" value="F:histone H3K36me3 reader activity"/>
    <property type="evidence" value="ECO:0000314"/>
    <property type="project" value="UniProtKB"/>
</dbReference>
<dbReference type="GO" id="GO:0035064">
    <property type="term" value="F:methylated histone binding"/>
    <property type="evidence" value="ECO:0007669"/>
    <property type="project" value="Ensembl"/>
</dbReference>
<dbReference type="GO" id="GO:0003714">
    <property type="term" value="F:transcription corepressor activity"/>
    <property type="evidence" value="ECO:0000315"/>
    <property type="project" value="UniProtKB"/>
</dbReference>
<dbReference type="GO" id="GO:0008270">
    <property type="term" value="F:zinc ion binding"/>
    <property type="evidence" value="ECO:0000314"/>
    <property type="project" value="UniProtKB"/>
</dbReference>
<dbReference type="GO" id="GO:0051607">
    <property type="term" value="P:defense response to virus"/>
    <property type="evidence" value="ECO:0007669"/>
    <property type="project" value="Ensembl"/>
</dbReference>
<dbReference type="GO" id="GO:0043124">
    <property type="term" value="P:negative regulation of canonical NF-kappaB signal transduction"/>
    <property type="evidence" value="ECO:0007669"/>
    <property type="project" value="Ensembl"/>
</dbReference>
<dbReference type="GO" id="GO:2001237">
    <property type="term" value="P:negative regulation of extrinsic apoptotic signaling pathway"/>
    <property type="evidence" value="ECO:0007669"/>
    <property type="project" value="Ensembl"/>
</dbReference>
<dbReference type="GO" id="GO:0046329">
    <property type="term" value="P:negative regulation of JNK cascade"/>
    <property type="evidence" value="ECO:0007669"/>
    <property type="project" value="Ensembl"/>
</dbReference>
<dbReference type="GO" id="GO:0034243">
    <property type="term" value="P:regulation of transcription elongation by RNA polymerase II"/>
    <property type="evidence" value="ECO:0000315"/>
    <property type="project" value="UniProtKB"/>
</dbReference>
<dbReference type="CDD" id="cd05492">
    <property type="entry name" value="Bromo_ZMYND11"/>
    <property type="match status" value="1"/>
</dbReference>
<dbReference type="CDD" id="cd15537">
    <property type="entry name" value="PHD_BS69"/>
    <property type="match status" value="1"/>
</dbReference>
<dbReference type="CDD" id="cd20159">
    <property type="entry name" value="PWWP_BS69"/>
    <property type="match status" value="1"/>
</dbReference>
<dbReference type="FunFam" id="6.10.140.2220:FF:000002">
    <property type="entry name" value="Protein kinase C-binding protein 1 isoform C"/>
    <property type="match status" value="1"/>
</dbReference>
<dbReference type="FunFam" id="2.30.30.140:FF:000011">
    <property type="entry name" value="Zinc finger MYND domain-containing protein 11"/>
    <property type="match status" value="1"/>
</dbReference>
<dbReference type="FunFam" id="3.30.40.10:FF:000081">
    <property type="entry name" value="Zinc finger MYND domain-containing protein 11"/>
    <property type="match status" value="1"/>
</dbReference>
<dbReference type="FunFam" id="1.20.920.10:FF:000012">
    <property type="entry name" value="zinc finger MYND domain-containing protein 11 isoform X1"/>
    <property type="match status" value="1"/>
</dbReference>
<dbReference type="Gene3D" id="2.30.30.140">
    <property type="match status" value="1"/>
</dbReference>
<dbReference type="Gene3D" id="6.10.140.2220">
    <property type="match status" value="1"/>
</dbReference>
<dbReference type="Gene3D" id="1.20.920.10">
    <property type="entry name" value="Bromodomain-like"/>
    <property type="match status" value="1"/>
</dbReference>
<dbReference type="Gene3D" id="3.30.40.10">
    <property type="entry name" value="Zinc/RING finger domain, C3HC4 (zinc finger)"/>
    <property type="match status" value="1"/>
</dbReference>
<dbReference type="InterPro" id="IPR001487">
    <property type="entry name" value="Bromodomain"/>
</dbReference>
<dbReference type="InterPro" id="IPR036427">
    <property type="entry name" value="Bromodomain-like_sf"/>
</dbReference>
<dbReference type="InterPro" id="IPR057053">
    <property type="entry name" value="MYND_ZMYND11_ZMYD8"/>
</dbReference>
<dbReference type="InterPro" id="IPR047268">
    <property type="entry name" value="PWWP_BS69"/>
</dbReference>
<dbReference type="InterPro" id="IPR000313">
    <property type="entry name" value="PWWP_dom"/>
</dbReference>
<dbReference type="InterPro" id="IPR048589">
    <property type="entry name" value="SAMD1-like_WH"/>
</dbReference>
<dbReference type="InterPro" id="IPR019786">
    <property type="entry name" value="Zinc_finger_PHD-type_CS"/>
</dbReference>
<dbReference type="InterPro" id="IPR047269">
    <property type="entry name" value="ZMY11"/>
</dbReference>
<dbReference type="InterPro" id="IPR057054">
    <property type="entry name" value="ZMYND11_CC"/>
</dbReference>
<dbReference type="InterPro" id="IPR011011">
    <property type="entry name" value="Znf_FYVE_PHD"/>
</dbReference>
<dbReference type="InterPro" id="IPR002893">
    <property type="entry name" value="Znf_MYND"/>
</dbReference>
<dbReference type="InterPro" id="IPR001965">
    <property type="entry name" value="Znf_PHD"/>
</dbReference>
<dbReference type="InterPro" id="IPR019787">
    <property type="entry name" value="Znf_PHD-finger"/>
</dbReference>
<dbReference type="InterPro" id="IPR013083">
    <property type="entry name" value="Znf_RING/FYVE/PHD"/>
</dbReference>
<dbReference type="PANTHER" id="PTHR46379">
    <property type="entry name" value="ZINC FINGER MYND DOMAIN-CONTAINING"/>
    <property type="match status" value="1"/>
</dbReference>
<dbReference type="PANTHER" id="PTHR46379:SF1">
    <property type="entry name" value="ZINC FINGER MYND DOMAIN-CONTAINING PROTEIN 11"/>
    <property type="match status" value="1"/>
</dbReference>
<dbReference type="Pfam" id="PF00439">
    <property type="entry name" value="Bromodomain"/>
    <property type="match status" value="1"/>
</dbReference>
<dbReference type="Pfam" id="PF24324">
    <property type="entry name" value="MYND_ZMYND11_ZMYD8"/>
    <property type="match status" value="1"/>
</dbReference>
<dbReference type="Pfam" id="PF00855">
    <property type="entry name" value="PWWP"/>
    <property type="match status" value="1"/>
</dbReference>
<dbReference type="Pfam" id="PF21524">
    <property type="entry name" value="SAMD1_WH"/>
    <property type="match status" value="1"/>
</dbReference>
<dbReference type="Pfam" id="PF23461">
    <property type="entry name" value="ZMYND11_CC"/>
    <property type="match status" value="1"/>
</dbReference>
<dbReference type="SMART" id="SM00297">
    <property type="entry name" value="BROMO"/>
    <property type="match status" value="1"/>
</dbReference>
<dbReference type="SMART" id="SM00249">
    <property type="entry name" value="PHD"/>
    <property type="match status" value="1"/>
</dbReference>
<dbReference type="SMART" id="SM00293">
    <property type="entry name" value="PWWP"/>
    <property type="match status" value="1"/>
</dbReference>
<dbReference type="SUPFAM" id="SSF47370">
    <property type="entry name" value="Bromodomain"/>
    <property type="match status" value="1"/>
</dbReference>
<dbReference type="SUPFAM" id="SSF57903">
    <property type="entry name" value="FYVE/PHD zinc finger"/>
    <property type="match status" value="1"/>
</dbReference>
<dbReference type="SUPFAM" id="SSF144232">
    <property type="entry name" value="HIT/MYND zinc finger-like"/>
    <property type="match status" value="1"/>
</dbReference>
<dbReference type="SUPFAM" id="SSF63748">
    <property type="entry name" value="Tudor/PWWP/MBT"/>
    <property type="match status" value="1"/>
</dbReference>
<dbReference type="PROSITE" id="PS50014">
    <property type="entry name" value="BROMODOMAIN_2"/>
    <property type="match status" value="1"/>
</dbReference>
<dbReference type="PROSITE" id="PS50812">
    <property type="entry name" value="PWWP"/>
    <property type="match status" value="1"/>
</dbReference>
<dbReference type="PROSITE" id="PS52014">
    <property type="entry name" value="SAMD1_WH"/>
    <property type="match status" value="1"/>
</dbReference>
<dbReference type="PROSITE" id="PS01360">
    <property type="entry name" value="ZF_MYND_1"/>
    <property type="match status" value="1"/>
</dbReference>
<dbReference type="PROSITE" id="PS50865">
    <property type="entry name" value="ZF_MYND_2"/>
    <property type="match status" value="1"/>
</dbReference>
<dbReference type="PROSITE" id="PS01359">
    <property type="entry name" value="ZF_PHD_1"/>
    <property type="match status" value="1"/>
</dbReference>
<dbReference type="PROSITE" id="PS50016">
    <property type="entry name" value="ZF_PHD_2"/>
    <property type="match status" value="1"/>
</dbReference>
<keyword id="KW-0002">3D-structure</keyword>
<keyword id="KW-0103">Bromodomain</keyword>
<keyword id="KW-0156">Chromatin regulator</keyword>
<keyword id="KW-0158">Chromosome</keyword>
<keyword id="KW-0238">DNA-binding</keyword>
<keyword id="KW-1017">Isopeptide bond</keyword>
<keyword id="KW-0479">Metal-binding</keyword>
<keyword id="KW-0539">Nucleus</keyword>
<keyword id="KW-0597">Phosphoprotein</keyword>
<keyword id="KW-1185">Reference proteome</keyword>
<keyword id="KW-0678">Repressor</keyword>
<keyword id="KW-0804">Transcription</keyword>
<keyword id="KW-0805">Transcription regulation</keyword>
<keyword id="KW-0043">Tumor suppressor</keyword>
<keyword id="KW-0832">Ubl conjugation</keyword>
<keyword id="KW-0862">Zinc</keyword>
<keyword id="KW-0863">Zinc-finger</keyword>
<name>ZMY11_MOUSE</name>
<reference key="1">
    <citation type="journal article" date="2009" name="PLoS Biol.">
        <title>Lineage-specific biology revealed by a finished genome assembly of the mouse.</title>
        <authorList>
            <person name="Church D.M."/>
            <person name="Goodstadt L."/>
            <person name="Hillier L.W."/>
            <person name="Zody M.C."/>
            <person name="Goldstein S."/>
            <person name="She X."/>
            <person name="Bult C.J."/>
            <person name="Agarwala R."/>
            <person name="Cherry J.L."/>
            <person name="DiCuccio M."/>
            <person name="Hlavina W."/>
            <person name="Kapustin Y."/>
            <person name="Meric P."/>
            <person name="Maglott D."/>
            <person name="Birtle Z."/>
            <person name="Marques A.C."/>
            <person name="Graves T."/>
            <person name="Zhou S."/>
            <person name="Teague B."/>
            <person name="Potamousis K."/>
            <person name="Churas C."/>
            <person name="Place M."/>
            <person name="Herschleb J."/>
            <person name="Runnheim R."/>
            <person name="Forrest D."/>
            <person name="Amos-Landgraf J."/>
            <person name="Schwartz D.C."/>
            <person name="Cheng Z."/>
            <person name="Lindblad-Toh K."/>
            <person name="Eichler E.E."/>
            <person name="Ponting C.P."/>
        </authorList>
    </citation>
    <scope>NUCLEOTIDE SEQUENCE [LARGE SCALE GENOMIC DNA]</scope>
    <source>
        <strain>C57BL/6J</strain>
    </source>
</reference>
<reference key="2">
    <citation type="submission" date="2005-07" db="EMBL/GenBank/DDBJ databases">
        <authorList>
            <person name="Mural R.J."/>
            <person name="Adams M.D."/>
            <person name="Myers E.W."/>
            <person name="Smith H.O."/>
            <person name="Venter J.C."/>
        </authorList>
    </citation>
    <scope>NUCLEOTIDE SEQUENCE [LARGE SCALE GENOMIC DNA]</scope>
</reference>
<reference key="3">
    <citation type="journal article" date="2004" name="Genome Res.">
        <title>The status, quality, and expansion of the NIH full-length cDNA project: the Mammalian Gene Collection (MGC).</title>
        <authorList>
            <consortium name="The MGC Project Team"/>
        </authorList>
    </citation>
    <scope>NUCLEOTIDE SEQUENCE [LARGE SCALE MRNA]</scope>
</reference>
<reference key="4">
    <citation type="journal article" date="2005" name="Science">
        <title>The transcriptional landscape of the mammalian genome.</title>
        <authorList>
            <person name="Carninci P."/>
            <person name="Kasukawa T."/>
            <person name="Katayama S."/>
            <person name="Gough J."/>
            <person name="Frith M.C."/>
            <person name="Maeda N."/>
            <person name="Oyama R."/>
            <person name="Ravasi T."/>
            <person name="Lenhard B."/>
            <person name="Wells C."/>
            <person name="Kodzius R."/>
            <person name="Shimokawa K."/>
            <person name="Bajic V.B."/>
            <person name="Brenner S.E."/>
            <person name="Batalov S."/>
            <person name="Forrest A.R."/>
            <person name="Zavolan M."/>
            <person name="Davis M.J."/>
            <person name="Wilming L.G."/>
            <person name="Aidinis V."/>
            <person name="Allen J.E."/>
            <person name="Ambesi-Impiombato A."/>
            <person name="Apweiler R."/>
            <person name="Aturaliya R.N."/>
            <person name="Bailey T.L."/>
            <person name="Bansal M."/>
            <person name="Baxter L."/>
            <person name="Beisel K.W."/>
            <person name="Bersano T."/>
            <person name="Bono H."/>
            <person name="Chalk A.M."/>
            <person name="Chiu K.P."/>
            <person name="Choudhary V."/>
            <person name="Christoffels A."/>
            <person name="Clutterbuck D.R."/>
            <person name="Crowe M.L."/>
            <person name="Dalla E."/>
            <person name="Dalrymple B.P."/>
            <person name="de Bono B."/>
            <person name="Della Gatta G."/>
            <person name="di Bernardo D."/>
            <person name="Down T."/>
            <person name="Engstrom P."/>
            <person name="Fagiolini M."/>
            <person name="Faulkner G."/>
            <person name="Fletcher C.F."/>
            <person name="Fukushima T."/>
            <person name="Furuno M."/>
            <person name="Futaki S."/>
            <person name="Gariboldi M."/>
            <person name="Georgii-Hemming P."/>
            <person name="Gingeras T.R."/>
            <person name="Gojobori T."/>
            <person name="Green R.E."/>
            <person name="Gustincich S."/>
            <person name="Harbers M."/>
            <person name="Hayashi Y."/>
            <person name="Hensch T.K."/>
            <person name="Hirokawa N."/>
            <person name="Hill D."/>
            <person name="Huminiecki L."/>
            <person name="Iacono M."/>
            <person name="Ikeo K."/>
            <person name="Iwama A."/>
            <person name="Ishikawa T."/>
            <person name="Jakt M."/>
            <person name="Kanapin A."/>
            <person name="Katoh M."/>
            <person name="Kawasawa Y."/>
            <person name="Kelso J."/>
            <person name="Kitamura H."/>
            <person name="Kitano H."/>
            <person name="Kollias G."/>
            <person name="Krishnan S.P."/>
            <person name="Kruger A."/>
            <person name="Kummerfeld S.K."/>
            <person name="Kurochkin I.V."/>
            <person name="Lareau L.F."/>
            <person name="Lazarevic D."/>
            <person name="Lipovich L."/>
            <person name="Liu J."/>
            <person name="Liuni S."/>
            <person name="McWilliam S."/>
            <person name="Madan Babu M."/>
            <person name="Madera M."/>
            <person name="Marchionni L."/>
            <person name="Matsuda H."/>
            <person name="Matsuzawa S."/>
            <person name="Miki H."/>
            <person name="Mignone F."/>
            <person name="Miyake S."/>
            <person name="Morris K."/>
            <person name="Mottagui-Tabar S."/>
            <person name="Mulder N."/>
            <person name="Nakano N."/>
            <person name="Nakauchi H."/>
            <person name="Ng P."/>
            <person name="Nilsson R."/>
            <person name="Nishiguchi S."/>
            <person name="Nishikawa S."/>
            <person name="Nori F."/>
            <person name="Ohara O."/>
            <person name="Okazaki Y."/>
            <person name="Orlando V."/>
            <person name="Pang K.C."/>
            <person name="Pavan W.J."/>
            <person name="Pavesi G."/>
            <person name="Pesole G."/>
            <person name="Petrovsky N."/>
            <person name="Piazza S."/>
            <person name="Reed J."/>
            <person name="Reid J.F."/>
            <person name="Ring B.Z."/>
            <person name="Ringwald M."/>
            <person name="Rost B."/>
            <person name="Ruan Y."/>
            <person name="Salzberg S.L."/>
            <person name="Sandelin A."/>
            <person name="Schneider C."/>
            <person name="Schoenbach C."/>
            <person name="Sekiguchi K."/>
            <person name="Semple C.A."/>
            <person name="Seno S."/>
            <person name="Sessa L."/>
            <person name="Sheng Y."/>
            <person name="Shibata Y."/>
            <person name="Shimada H."/>
            <person name="Shimada K."/>
            <person name="Silva D."/>
            <person name="Sinclair B."/>
            <person name="Sperling S."/>
            <person name="Stupka E."/>
            <person name="Sugiura K."/>
            <person name="Sultana R."/>
            <person name="Takenaka Y."/>
            <person name="Taki K."/>
            <person name="Tammoja K."/>
            <person name="Tan S.L."/>
            <person name="Tang S."/>
            <person name="Taylor M.S."/>
            <person name="Tegner J."/>
            <person name="Teichmann S.A."/>
            <person name="Ueda H.R."/>
            <person name="van Nimwegen E."/>
            <person name="Verardo R."/>
            <person name="Wei C.L."/>
            <person name="Yagi K."/>
            <person name="Yamanishi H."/>
            <person name="Zabarovsky E."/>
            <person name="Zhu S."/>
            <person name="Zimmer A."/>
            <person name="Hide W."/>
            <person name="Bult C."/>
            <person name="Grimmond S.M."/>
            <person name="Teasdale R.D."/>
            <person name="Liu E.T."/>
            <person name="Brusic V."/>
            <person name="Quackenbush J."/>
            <person name="Wahlestedt C."/>
            <person name="Mattick J.S."/>
            <person name="Hume D.A."/>
            <person name="Kai C."/>
            <person name="Sasaki D."/>
            <person name="Tomaru Y."/>
            <person name="Fukuda S."/>
            <person name="Kanamori-Katayama M."/>
            <person name="Suzuki M."/>
            <person name="Aoki J."/>
            <person name="Arakawa T."/>
            <person name="Iida J."/>
            <person name="Imamura K."/>
            <person name="Itoh M."/>
            <person name="Kato T."/>
            <person name="Kawaji H."/>
            <person name="Kawagashira N."/>
            <person name="Kawashima T."/>
            <person name="Kojima M."/>
            <person name="Kondo S."/>
            <person name="Konno H."/>
            <person name="Nakano K."/>
            <person name="Ninomiya N."/>
            <person name="Nishio T."/>
            <person name="Okada M."/>
            <person name="Plessy C."/>
            <person name="Shibata K."/>
            <person name="Shiraki T."/>
            <person name="Suzuki S."/>
            <person name="Tagami M."/>
            <person name="Waki K."/>
            <person name="Watahiki A."/>
            <person name="Okamura-Oho Y."/>
            <person name="Suzuki H."/>
            <person name="Kawai J."/>
            <person name="Hayashizaki Y."/>
        </authorList>
    </citation>
    <scope>NUCLEOTIDE SEQUENCE [LARGE SCALE MRNA] OF 101-602</scope>
    <source>
        <strain>C57BL/6J</strain>
        <tissue>Skin</tissue>
    </source>
</reference>
<reference key="5">
    <citation type="journal article" date="2014" name="Nature">
        <title>ZMYND11 links histone H3.3K36me3 to transcription elongation and tumour suppression.</title>
        <authorList>
            <person name="Wen H."/>
            <person name="Li Y."/>
            <person name="Xi Y."/>
            <person name="Jiang S."/>
            <person name="Stratton S."/>
            <person name="Peng D."/>
            <person name="Tanaka K."/>
            <person name="Ren Y."/>
            <person name="Xia Z."/>
            <person name="Wu J."/>
            <person name="Li B."/>
            <person name="Barton M.C."/>
            <person name="Li W."/>
            <person name="Li H."/>
            <person name="Shi X."/>
        </authorList>
    </citation>
    <scope>X-RAY CRYSTALLOGRAPHY (1.95 ANGSTROMS) OF 154-371 IN COMPLEXES WITH HISTONE 3.3 TAIL AND ZINC</scope>
    <scope>FUNCTION</scope>
    <scope>MUTAGENESIS OF ARG-168; 234-ASP--GLU-236; GLU-251; ASN-266; PHE-291; TRP-294; ASP-307 AND PHE-310</scope>
</reference>
<accession>Q8R5C8</accession>
<accession>G5E8Q2</accession>
<accession>Q8C155</accession>
<evidence type="ECO:0000250" key="1">
    <source>
        <dbReference type="UniProtKB" id="Q15326"/>
    </source>
</evidence>
<evidence type="ECO:0000255" key="2"/>
<evidence type="ECO:0000255" key="3">
    <source>
        <dbReference type="PROSITE-ProRule" id="PRU00035"/>
    </source>
</evidence>
<evidence type="ECO:0000255" key="4">
    <source>
        <dbReference type="PROSITE-ProRule" id="PRU00134"/>
    </source>
</evidence>
<evidence type="ECO:0000255" key="5">
    <source>
        <dbReference type="PROSITE-ProRule" id="PRU00146"/>
    </source>
</evidence>
<evidence type="ECO:0000255" key="6">
    <source>
        <dbReference type="PROSITE-ProRule" id="PRU00162"/>
    </source>
</evidence>
<evidence type="ECO:0000255" key="7">
    <source>
        <dbReference type="PROSITE-ProRule" id="PRU01358"/>
    </source>
</evidence>
<evidence type="ECO:0000256" key="8">
    <source>
        <dbReference type="SAM" id="MobiDB-lite"/>
    </source>
</evidence>
<evidence type="ECO:0000269" key="9">
    <source>
    </source>
</evidence>
<evidence type="ECO:0000305" key="10"/>
<evidence type="ECO:0007744" key="11">
    <source>
        <dbReference type="PDB" id="4N4G"/>
    </source>
</evidence>
<evidence type="ECO:0007744" key="12">
    <source>
        <dbReference type="PDB" id="4N4I"/>
    </source>
</evidence>
<evidence type="ECO:0007829" key="13">
    <source>
        <dbReference type="PDB" id="4N4G"/>
    </source>
</evidence>
<evidence type="ECO:0007829" key="14">
    <source>
        <dbReference type="PDB" id="4N4I"/>
    </source>
</evidence>